<proteinExistence type="inferred from homology"/>
<name>PROB_CLOAB</name>
<accession>Q97E63</accession>
<feature type="chain" id="PRO_0000109660" description="Glutamate 5-kinase">
    <location>
        <begin position="1"/>
        <end position="267"/>
    </location>
</feature>
<feature type="binding site" evidence="1">
    <location>
        <position position="17"/>
    </location>
    <ligand>
        <name>ATP</name>
        <dbReference type="ChEBI" id="CHEBI:30616"/>
    </ligand>
</feature>
<feature type="binding site" evidence="1">
    <location>
        <position position="57"/>
    </location>
    <ligand>
        <name>substrate</name>
    </ligand>
</feature>
<feature type="binding site" evidence="1">
    <location>
        <position position="144"/>
    </location>
    <ligand>
        <name>substrate</name>
    </ligand>
</feature>
<feature type="binding site" evidence="1">
    <location>
        <position position="156"/>
    </location>
    <ligand>
        <name>substrate</name>
    </ligand>
</feature>
<feature type="binding site" evidence="1">
    <location>
        <begin position="176"/>
        <end position="177"/>
    </location>
    <ligand>
        <name>ATP</name>
        <dbReference type="ChEBI" id="CHEBI:30616"/>
    </ligand>
</feature>
<feature type="binding site" evidence="1">
    <location>
        <begin position="218"/>
        <end position="224"/>
    </location>
    <ligand>
        <name>ATP</name>
        <dbReference type="ChEBI" id="CHEBI:30616"/>
    </ligand>
</feature>
<dbReference type="EC" id="2.7.2.11" evidence="1"/>
<dbReference type="EMBL" id="AE001437">
    <property type="protein sequence ID" value="AAK81187.1"/>
    <property type="molecule type" value="Genomic_DNA"/>
</dbReference>
<dbReference type="PIR" id="H97299">
    <property type="entry name" value="H97299"/>
</dbReference>
<dbReference type="RefSeq" id="NP_349847.1">
    <property type="nucleotide sequence ID" value="NC_003030.1"/>
</dbReference>
<dbReference type="RefSeq" id="WP_010966527.1">
    <property type="nucleotide sequence ID" value="NC_003030.1"/>
</dbReference>
<dbReference type="SMR" id="Q97E63"/>
<dbReference type="STRING" id="272562.CA_C3253"/>
<dbReference type="DNASU" id="1119435"/>
<dbReference type="GeneID" id="44999750"/>
<dbReference type="KEGG" id="cac:CA_C3253"/>
<dbReference type="PATRIC" id="fig|272562.8.peg.3431"/>
<dbReference type="eggNOG" id="COG0263">
    <property type="taxonomic scope" value="Bacteria"/>
</dbReference>
<dbReference type="HOGENOM" id="CLU_025400_0_2_9"/>
<dbReference type="OrthoDB" id="9804434at2"/>
<dbReference type="UniPathway" id="UPA00098">
    <property type="reaction ID" value="UER00359"/>
</dbReference>
<dbReference type="Proteomes" id="UP000000814">
    <property type="component" value="Chromosome"/>
</dbReference>
<dbReference type="GO" id="GO:0005829">
    <property type="term" value="C:cytosol"/>
    <property type="evidence" value="ECO:0007669"/>
    <property type="project" value="TreeGrafter"/>
</dbReference>
<dbReference type="GO" id="GO:0005524">
    <property type="term" value="F:ATP binding"/>
    <property type="evidence" value="ECO:0007669"/>
    <property type="project" value="UniProtKB-KW"/>
</dbReference>
<dbReference type="GO" id="GO:0004349">
    <property type="term" value="F:glutamate 5-kinase activity"/>
    <property type="evidence" value="ECO:0007669"/>
    <property type="project" value="UniProtKB-UniRule"/>
</dbReference>
<dbReference type="GO" id="GO:0055129">
    <property type="term" value="P:L-proline biosynthetic process"/>
    <property type="evidence" value="ECO:0007669"/>
    <property type="project" value="UniProtKB-UniRule"/>
</dbReference>
<dbReference type="CDD" id="cd04242">
    <property type="entry name" value="AAK_G5K_ProB"/>
    <property type="match status" value="1"/>
</dbReference>
<dbReference type="FunFam" id="3.40.1160.10:FF:000018">
    <property type="entry name" value="Glutamate 5-kinase"/>
    <property type="match status" value="1"/>
</dbReference>
<dbReference type="Gene3D" id="3.40.1160.10">
    <property type="entry name" value="Acetylglutamate kinase-like"/>
    <property type="match status" value="1"/>
</dbReference>
<dbReference type="HAMAP" id="MF_00456">
    <property type="entry name" value="ProB"/>
    <property type="match status" value="1"/>
</dbReference>
<dbReference type="InterPro" id="IPR036393">
    <property type="entry name" value="AceGlu_kinase-like_sf"/>
</dbReference>
<dbReference type="InterPro" id="IPR001048">
    <property type="entry name" value="Asp/Glu/Uridylate_kinase"/>
</dbReference>
<dbReference type="InterPro" id="IPR041739">
    <property type="entry name" value="G5K_ProB"/>
</dbReference>
<dbReference type="InterPro" id="IPR001057">
    <property type="entry name" value="Glu/AcGlu_kinase"/>
</dbReference>
<dbReference type="InterPro" id="IPR011529">
    <property type="entry name" value="Glu_5kinase"/>
</dbReference>
<dbReference type="InterPro" id="IPR005715">
    <property type="entry name" value="Glu_5kinase/COase_Synthase"/>
</dbReference>
<dbReference type="InterPro" id="IPR019797">
    <property type="entry name" value="Glutamate_5-kinase_CS"/>
</dbReference>
<dbReference type="NCBIfam" id="TIGR01027">
    <property type="entry name" value="proB"/>
    <property type="match status" value="1"/>
</dbReference>
<dbReference type="PANTHER" id="PTHR43654">
    <property type="entry name" value="GLUTAMATE 5-KINASE"/>
    <property type="match status" value="1"/>
</dbReference>
<dbReference type="PANTHER" id="PTHR43654:SF1">
    <property type="entry name" value="ISOPENTENYL PHOSPHATE KINASE"/>
    <property type="match status" value="1"/>
</dbReference>
<dbReference type="Pfam" id="PF00696">
    <property type="entry name" value="AA_kinase"/>
    <property type="match status" value="1"/>
</dbReference>
<dbReference type="PIRSF" id="PIRSF000729">
    <property type="entry name" value="GK"/>
    <property type="match status" value="1"/>
</dbReference>
<dbReference type="PRINTS" id="PR00474">
    <property type="entry name" value="GLU5KINASE"/>
</dbReference>
<dbReference type="SUPFAM" id="SSF53633">
    <property type="entry name" value="Carbamate kinase-like"/>
    <property type="match status" value="1"/>
</dbReference>
<dbReference type="PROSITE" id="PS00902">
    <property type="entry name" value="GLUTAMATE_5_KINASE"/>
    <property type="match status" value="1"/>
</dbReference>
<keyword id="KW-0028">Amino-acid biosynthesis</keyword>
<keyword id="KW-0067">ATP-binding</keyword>
<keyword id="KW-0963">Cytoplasm</keyword>
<keyword id="KW-0418">Kinase</keyword>
<keyword id="KW-0547">Nucleotide-binding</keyword>
<keyword id="KW-0641">Proline biosynthesis</keyword>
<keyword id="KW-1185">Reference proteome</keyword>
<keyword id="KW-0808">Transferase</keyword>
<reference key="1">
    <citation type="journal article" date="2001" name="J. Bacteriol.">
        <title>Genome sequence and comparative analysis of the solvent-producing bacterium Clostridium acetobutylicum.</title>
        <authorList>
            <person name="Noelling J."/>
            <person name="Breton G."/>
            <person name="Omelchenko M.V."/>
            <person name="Makarova K.S."/>
            <person name="Zeng Q."/>
            <person name="Gibson R."/>
            <person name="Lee H.M."/>
            <person name="Dubois J."/>
            <person name="Qiu D."/>
            <person name="Hitti J."/>
            <person name="Wolf Y.I."/>
            <person name="Tatusov R.L."/>
            <person name="Sabathe F."/>
            <person name="Doucette-Stamm L.A."/>
            <person name="Soucaille P."/>
            <person name="Daly M.J."/>
            <person name="Bennett G.N."/>
            <person name="Koonin E.V."/>
            <person name="Smith D.R."/>
        </authorList>
    </citation>
    <scope>NUCLEOTIDE SEQUENCE [LARGE SCALE GENOMIC DNA]</scope>
    <source>
        <strain>ATCC 824 / DSM 792 / JCM 1419 / IAM 19013 / LMG 5710 / NBRC 13948 / NRRL B-527 / VKM B-1787 / 2291 / W</strain>
    </source>
</reference>
<evidence type="ECO:0000255" key="1">
    <source>
        <dbReference type="HAMAP-Rule" id="MF_00456"/>
    </source>
</evidence>
<gene>
    <name evidence="1" type="primary">proB</name>
    <name type="ordered locus">CA_C3253</name>
</gene>
<comment type="function">
    <text evidence="1">Catalyzes the transfer of a phosphate group to glutamate to form L-glutamate 5-phosphate.</text>
</comment>
<comment type="catalytic activity">
    <reaction evidence="1">
        <text>L-glutamate + ATP = L-glutamyl 5-phosphate + ADP</text>
        <dbReference type="Rhea" id="RHEA:14877"/>
        <dbReference type="ChEBI" id="CHEBI:29985"/>
        <dbReference type="ChEBI" id="CHEBI:30616"/>
        <dbReference type="ChEBI" id="CHEBI:58274"/>
        <dbReference type="ChEBI" id="CHEBI:456216"/>
        <dbReference type="EC" id="2.7.2.11"/>
    </reaction>
</comment>
<comment type="pathway">
    <text evidence="1">Amino-acid biosynthesis; L-proline biosynthesis; L-glutamate 5-semialdehyde from L-glutamate: step 1/2.</text>
</comment>
<comment type="subcellular location">
    <subcellularLocation>
        <location evidence="1">Cytoplasm</location>
    </subcellularLocation>
</comment>
<comment type="similarity">
    <text evidence="1">Belongs to the glutamate 5-kinase family.</text>
</comment>
<organism>
    <name type="scientific">Clostridium acetobutylicum (strain ATCC 824 / DSM 792 / JCM 1419 / IAM 19013 / LMG 5710 / NBRC 13948 / NRRL B-527 / VKM B-1787 / 2291 / W)</name>
    <dbReference type="NCBI Taxonomy" id="272562"/>
    <lineage>
        <taxon>Bacteria</taxon>
        <taxon>Bacillati</taxon>
        <taxon>Bacillota</taxon>
        <taxon>Clostridia</taxon>
        <taxon>Eubacteriales</taxon>
        <taxon>Clostridiaceae</taxon>
        <taxon>Clostridium</taxon>
    </lineage>
</organism>
<protein>
    <recommendedName>
        <fullName evidence="1">Glutamate 5-kinase</fullName>
        <ecNumber evidence="1">2.7.2.11</ecNumber>
    </recommendedName>
    <alternativeName>
        <fullName evidence="1">Gamma-glutamyl kinase</fullName>
        <shortName evidence="1">GK</shortName>
    </alternativeName>
</protein>
<sequence length="267" mass="28781">MNTREKYLSNVNRLVIKVGSSTLTHPSGLLNFYKIEHIVRQIADLHNQGIKVILVSSGAIGAGIGKLRLKERPKTIPEKQAAAAVGQGVLMHTYEKLFAEYGQIVGQILITREDLSSKKRVVNVQNTFSALLDHGIIPIVNENDATVVEEIKFGDNDTLSARVASLIKADLLILLSDIDGLYDSNPAVNKNAVLIDTVNEVNEEVKASAGGAGSKLGTGGMATKIRAAEIATENGISMVIANGEKQEAIRNILNFENEGTLFIPKNK</sequence>